<sequence>MLIPHDLLEADTLNNLLEDFVTREGTDNGDETPLDVRVERARHALRRGEAVILFDPESQQCQLMLRSEVPAELLRD</sequence>
<reference key="1">
    <citation type="submission" date="2007-06" db="EMBL/GenBank/DDBJ databases">
        <authorList>
            <person name="Dodson R.J."/>
            <person name="Harkins D."/>
            <person name="Paulsen I.T."/>
        </authorList>
    </citation>
    <scope>NUCLEOTIDE SEQUENCE [LARGE SCALE GENOMIC DNA]</scope>
    <source>
        <strain>DSM 24068 / PA7</strain>
    </source>
</reference>
<comment type="similarity">
    <text evidence="1">Belongs to the UPF0270 family.</text>
</comment>
<name>Y1664_PSEP7</name>
<organism>
    <name type="scientific">Pseudomonas paraeruginosa (strain DSM 24068 / PA7)</name>
    <name type="common">Pseudomonas aeruginosa (strain PA7)</name>
    <dbReference type="NCBI Taxonomy" id="381754"/>
    <lineage>
        <taxon>Bacteria</taxon>
        <taxon>Pseudomonadati</taxon>
        <taxon>Pseudomonadota</taxon>
        <taxon>Gammaproteobacteria</taxon>
        <taxon>Pseudomonadales</taxon>
        <taxon>Pseudomonadaceae</taxon>
        <taxon>Pseudomonas</taxon>
        <taxon>Pseudomonas paraeruginosa</taxon>
    </lineage>
</organism>
<proteinExistence type="inferred from homology"/>
<dbReference type="EMBL" id="CP000744">
    <property type="protein sequence ID" value="ABR86582.1"/>
    <property type="molecule type" value="Genomic_DNA"/>
</dbReference>
<dbReference type="RefSeq" id="WP_003091959.1">
    <property type="nucleotide sequence ID" value="NC_009656.1"/>
</dbReference>
<dbReference type="SMR" id="A6V1W3"/>
<dbReference type="KEGG" id="pap:PSPA7_1664"/>
<dbReference type="HOGENOM" id="CLU_186759_2_0_6"/>
<dbReference type="Proteomes" id="UP000001582">
    <property type="component" value="Chromosome"/>
</dbReference>
<dbReference type="Gene3D" id="1.10.10.610">
    <property type="entry name" value="YehU-like"/>
    <property type="match status" value="1"/>
</dbReference>
<dbReference type="HAMAP" id="MF_00690">
    <property type="entry name" value="UPF0270"/>
    <property type="match status" value="1"/>
</dbReference>
<dbReference type="InterPro" id="IPR010648">
    <property type="entry name" value="UPF0270"/>
</dbReference>
<dbReference type="InterPro" id="IPR036685">
    <property type="entry name" value="YehU-like_sf"/>
</dbReference>
<dbReference type="NCBIfam" id="NF001441">
    <property type="entry name" value="PRK00304.1"/>
    <property type="match status" value="1"/>
</dbReference>
<dbReference type="Pfam" id="PF06794">
    <property type="entry name" value="UPF0270"/>
    <property type="match status" value="1"/>
</dbReference>
<dbReference type="PIRSF" id="PIRSF006169">
    <property type="entry name" value="UCP006169"/>
    <property type="match status" value="1"/>
</dbReference>
<dbReference type="SUPFAM" id="SSF118001">
    <property type="entry name" value="YehU-like"/>
    <property type="match status" value="1"/>
</dbReference>
<evidence type="ECO:0000255" key="1">
    <source>
        <dbReference type="HAMAP-Rule" id="MF_00690"/>
    </source>
</evidence>
<gene>
    <name type="ordered locus">PSPA7_1664</name>
</gene>
<feature type="chain" id="PRO_1000062015" description="UPF0270 protein PSPA7_1664">
    <location>
        <begin position="1"/>
        <end position="76"/>
    </location>
</feature>
<protein>
    <recommendedName>
        <fullName evidence="1">UPF0270 protein PSPA7_1664</fullName>
    </recommendedName>
</protein>
<accession>A6V1W3</accession>